<organism>
    <name type="scientific">Corynebacterium glutamicum (strain ATCC 13032 / DSM 20300 / JCM 1318 / BCRC 11384 / CCUG 27702 / LMG 3730 / NBRC 12168 / NCIMB 10025 / NRRL B-2784 / 534)</name>
    <dbReference type="NCBI Taxonomy" id="196627"/>
    <lineage>
        <taxon>Bacteria</taxon>
        <taxon>Bacillati</taxon>
        <taxon>Actinomycetota</taxon>
        <taxon>Actinomycetes</taxon>
        <taxon>Mycobacteriales</taxon>
        <taxon>Corynebacteriaceae</taxon>
        <taxon>Corynebacterium</taxon>
    </lineage>
</organism>
<comment type="function">
    <text evidence="1">Plays an essential role in the initiation and regulation of chromosomal replication. ATP-DnaA binds to the origin of replication (oriC) to initiate formation of the DNA replication initiation complex once per cell cycle. Binds the DnaA box (a 9 base pair repeat at the origin) and separates the double-stranded (ds)DNA. Forms a right-handed helical filament on oriC DNA; dsDNA binds to the exterior of the filament while single-stranded (ss)DNA is stabiized in the filament's interior. The ATP-DnaA-oriC complex binds and stabilizes one strand of the AT-rich DNA unwinding element (DUE), permitting loading of DNA polymerase. After initiation quickly degrades to an ADP-DnaA complex that is not apt for DNA replication. Binds acidic phospholipids.</text>
</comment>
<comment type="subunit">
    <text evidence="1">Oligomerizes as a right-handed, spiral filament on DNA at oriC.</text>
</comment>
<comment type="subcellular location">
    <subcellularLocation>
        <location evidence="1">Cytoplasm</location>
    </subcellularLocation>
</comment>
<comment type="domain">
    <text evidence="1">Domain I is involved in oligomerization and binding regulators, domain II is flexibile and of varying length in different bacteria, domain III forms the AAA+ region, while domain IV binds dsDNA.</text>
</comment>
<comment type="similarity">
    <text evidence="1">Belongs to the DnaA family.</text>
</comment>
<gene>
    <name evidence="1" type="primary">dnaA</name>
    <name type="ordered locus">Cgl0001</name>
    <name type="ordered locus">cg0001</name>
</gene>
<accession>Q8NUD8</accession>
<reference key="1">
    <citation type="journal article" date="2003" name="Appl. Microbiol. Biotechnol.">
        <title>The Corynebacterium glutamicum genome: features and impacts on biotechnological processes.</title>
        <authorList>
            <person name="Ikeda M."/>
            <person name="Nakagawa S."/>
        </authorList>
    </citation>
    <scope>NUCLEOTIDE SEQUENCE [LARGE SCALE GENOMIC DNA]</scope>
    <source>
        <strain>ATCC 13032 / DSM 20300 / JCM 1318 / BCRC 11384 / CCUG 27702 / LMG 3730 / NBRC 12168 / NCIMB 10025 / NRRL B-2784 / 534</strain>
    </source>
</reference>
<reference key="2">
    <citation type="journal article" date="2003" name="J. Biotechnol.">
        <title>The complete Corynebacterium glutamicum ATCC 13032 genome sequence and its impact on the production of L-aspartate-derived amino acids and vitamins.</title>
        <authorList>
            <person name="Kalinowski J."/>
            <person name="Bathe B."/>
            <person name="Bartels D."/>
            <person name="Bischoff N."/>
            <person name="Bott M."/>
            <person name="Burkovski A."/>
            <person name="Dusch N."/>
            <person name="Eggeling L."/>
            <person name="Eikmanns B.J."/>
            <person name="Gaigalat L."/>
            <person name="Goesmann A."/>
            <person name="Hartmann M."/>
            <person name="Huthmacher K."/>
            <person name="Kraemer R."/>
            <person name="Linke B."/>
            <person name="McHardy A.C."/>
            <person name="Meyer F."/>
            <person name="Moeckel B."/>
            <person name="Pfefferle W."/>
            <person name="Puehler A."/>
            <person name="Rey D.A."/>
            <person name="Rueckert C."/>
            <person name="Rupp O."/>
            <person name="Sahm H."/>
            <person name="Wendisch V.F."/>
            <person name="Wiegraebe I."/>
            <person name="Tauch A."/>
        </authorList>
    </citation>
    <scope>NUCLEOTIDE SEQUENCE [LARGE SCALE GENOMIC DNA]</scope>
    <source>
        <strain>ATCC 13032 / DSM 20300 / JCM 1318 / BCRC 11384 / CCUG 27702 / LMG 3730 / NBRC 12168 / NCIMB 10025 / NRRL B-2784 / 534</strain>
    </source>
</reference>
<name>DNAA_CORGL</name>
<proteinExistence type="inferred from homology"/>
<dbReference type="EMBL" id="BA000036">
    <property type="protein sequence ID" value="BAB97394.1"/>
    <property type="molecule type" value="Genomic_DNA"/>
</dbReference>
<dbReference type="EMBL" id="BX927148">
    <property type="protein sequence ID" value="CAF18566.1"/>
    <property type="molecule type" value="Genomic_DNA"/>
</dbReference>
<dbReference type="RefSeq" id="NP_599253.1">
    <property type="nucleotide sequence ID" value="NC_003450.3"/>
</dbReference>
<dbReference type="RefSeq" id="WP_011013309.1">
    <property type="nucleotide sequence ID" value="NC_006958.1"/>
</dbReference>
<dbReference type="SMR" id="Q8NUD8"/>
<dbReference type="STRING" id="196627.cg0001"/>
<dbReference type="GeneID" id="1021144"/>
<dbReference type="KEGG" id="cgb:cg0001"/>
<dbReference type="KEGG" id="cgl:Cgl0001"/>
<dbReference type="PATRIC" id="fig|196627.13.peg.1"/>
<dbReference type="eggNOG" id="COG0593">
    <property type="taxonomic scope" value="Bacteria"/>
</dbReference>
<dbReference type="HOGENOM" id="CLU_026910_2_0_11"/>
<dbReference type="OrthoDB" id="9807019at2"/>
<dbReference type="BioCyc" id="CORYNE:G18NG-9541-MONOMER"/>
<dbReference type="Proteomes" id="UP000000582">
    <property type="component" value="Chromosome"/>
</dbReference>
<dbReference type="Proteomes" id="UP000001009">
    <property type="component" value="Chromosome"/>
</dbReference>
<dbReference type="GO" id="GO:0005737">
    <property type="term" value="C:cytoplasm"/>
    <property type="evidence" value="ECO:0007669"/>
    <property type="project" value="UniProtKB-SubCell"/>
</dbReference>
<dbReference type="GO" id="GO:0005886">
    <property type="term" value="C:plasma membrane"/>
    <property type="evidence" value="ECO:0007669"/>
    <property type="project" value="TreeGrafter"/>
</dbReference>
<dbReference type="GO" id="GO:0005524">
    <property type="term" value="F:ATP binding"/>
    <property type="evidence" value="ECO:0007669"/>
    <property type="project" value="UniProtKB-UniRule"/>
</dbReference>
<dbReference type="GO" id="GO:0016887">
    <property type="term" value="F:ATP hydrolysis activity"/>
    <property type="evidence" value="ECO:0007669"/>
    <property type="project" value="InterPro"/>
</dbReference>
<dbReference type="GO" id="GO:0003688">
    <property type="term" value="F:DNA replication origin binding"/>
    <property type="evidence" value="ECO:0007669"/>
    <property type="project" value="UniProtKB-UniRule"/>
</dbReference>
<dbReference type="GO" id="GO:0008289">
    <property type="term" value="F:lipid binding"/>
    <property type="evidence" value="ECO:0007669"/>
    <property type="project" value="UniProtKB-KW"/>
</dbReference>
<dbReference type="GO" id="GO:0006270">
    <property type="term" value="P:DNA replication initiation"/>
    <property type="evidence" value="ECO:0007669"/>
    <property type="project" value="UniProtKB-UniRule"/>
</dbReference>
<dbReference type="GO" id="GO:0006275">
    <property type="term" value="P:regulation of DNA replication"/>
    <property type="evidence" value="ECO:0007669"/>
    <property type="project" value="UniProtKB-UniRule"/>
</dbReference>
<dbReference type="CDD" id="cd00009">
    <property type="entry name" value="AAA"/>
    <property type="match status" value="1"/>
</dbReference>
<dbReference type="CDD" id="cd06571">
    <property type="entry name" value="Bac_DnaA_C"/>
    <property type="match status" value="1"/>
</dbReference>
<dbReference type="FunFam" id="1.10.1750.10:FF:000002">
    <property type="entry name" value="Chromosomal replication initiator protein DnaA"/>
    <property type="match status" value="1"/>
</dbReference>
<dbReference type="FunFam" id="1.10.8.60:FF:000003">
    <property type="entry name" value="Chromosomal replication initiator protein DnaA"/>
    <property type="match status" value="1"/>
</dbReference>
<dbReference type="FunFam" id="3.40.50.300:FF:000150">
    <property type="entry name" value="Chromosomal replication initiator protein DnaA"/>
    <property type="match status" value="1"/>
</dbReference>
<dbReference type="Gene3D" id="1.10.1750.10">
    <property type="match status" value="1"/>
</dbReference>
<dbReference type="Gene3D" id="1.10.8.60">
    <property type="match status" value="1"/>
</dbReference>
<dbReference type="Gene3D" id="3.40.50.300">
    <property type="entry name" value="P-loop containing nucleotide triphosphate hydrolases"/>
    <property type="match status" value="1"/>
</dbReference>
<dbReference type="HAMAP" id="MF_00377">
    <property type="entry name" value="DnaA_bact"/>
    <property type="match status" value="1"/>
</dbReference>
<dbReference type="InterPro" id="IPR003593">
    <property type="entry name" value="AAA+_ATPase"/>
</dbReference>
<dbReference type="InterPro" id="IPR001957">
    <property type="entry name" value="Chromosome_initiator_DnaA"/>
</dbReference>
<dbReference type="InterPro" id="IPR020591">
    <property type="entry name" value="Chromosome_initiator_DnaA-like"/>
</dbReference>
<dbReference type="InterPro" id="IPR018312">
    <property type="entry name" value="Chromosome_initiator_DnaA_CS"/>
</dbReference>
<dbReference type="InterPro" id="IPR013159">
    <property type="entry name" value="DnaA_C"/>
</dbReference>
<dbReference type="InterPro" id="IPR013317">
    <property type="entry name" value="DnaA_dom"/>
</dbReference>
<dbReference type="InterPro" id="IPR027417">
    <property type="entry name" value="P-loop_NTPase"/>
</dbReference>
<dbReference type="InterPro" id="IPR010921">
    <property type="entry name" value="Trp_repressor/repl_initiator"/>
</dbReference>
<dbReference type="NCBIfam" id="TIGR00362">
    <property type="entry name" value="DnaA"/>
    <property type="match status" value="1"/>
</dbReference>
<dbReference type="NCBIfam" id="NF010686">
    <property type="entry name" value="PRK14086.1"/>
    <property type="match status" value="1"/>
</dbReference>
<dbReference type="PANTHER" id="PTHR30050">
    <property type="entry name" value="CHROMOSOMAL REPLICATION INITIATOR PROTEIN DNAA"/>
    <property type="match status" value="1"/>
</dbReference>
<dbReference type="PANTHER" id="PTHR30050:SF2">
    <property type="entry name" value="CHROMOSOMAL REPLICATION INITIATOR PROTEIN DNAA"/>
    <property type="match status" value="1"/>
</dbReference>
<dbReference type="Pfam" id="PF00308">
    <property type="entry name" value="Bac_DnaA"/>
    <property type="match status" value="1"/>
</dbReference>
<dbReference type="Pfam" id="PF08299">
    <property type="entry name" value="Bac_DnaA_C"/>
    <property type="match status" value="1"/>
</dbReference>
<dbReference type="PRINTS" id="PR00051">
    <property type="entry name" value="DNAA"/>
</dbReference>
<dbReference type="SMART" id="SM00382">
    <property type="entry name" value="AAA"/>
    <property type="match status" value="1"/>
</dbReference>
<dbReference type="SMART" id="SM00760">
    <property type="entry name" value="Bac_DnaA_C"/>
    <property type="match status" value="1"/>
</dbReference>
<dbReference type="SUPFAM" id="SSF52540">
    <property type="entry name" value="P-loop containing nucleoside triphosphate hydrolases"/>
    <property type="match status" value="1"/>
</dbReference>
<dbReference type="SUPFAM" id="SSF48295">
    <property type="entry name" value="TrpR-like"/>
    <property type="match status" value="1"/>
</dbReference>
<dbReference type="PROSITE" id="PS01008">
    <property type="entry name" value="DNAA"/>
    <property type="match status" value="1"/>
</dbReference>
<feature type="chain" id="PRO_0000114169" description="Chromosomal replication initiator protein DnaA">
    <location>
        <begin position="1"/>
        <end position="524"/>
    </location>
</feature>
<feature type="region of interest" description="Domain I, interacts with DnaA modulators" evidence="1">
    <location>
        <begin position="1"/>
        <end position="85"/>
    </location>
</feature>
<feature type="region of interest" description="Domain II" evidence="1">
    <location>
        <begin position="85"/>
        <end position="182"/>
    </location>
</feature>
<feature type="region of interest" description="Disordered" evidence="2">
    <location>
        <begin position="95"/>
        <end position="183"/>
    </location>
</feature>
<feature type="region of interest" description="Domain III, AAA+ region" evidence="1">
    <location>
        <begin position="183"/>
        <end position="399"/>
    </location>
</feature>
<feature type="region of interest" description="Domain IV, binds dsDNA" evidence="1">
    <location>
        <begin position="400"/>
        <end position="524"/>
    </location>
</feature>
<feature type="compositionally biased region" description="Pro residues" evidence="2">
    <location>
        <begin position="148"/>
        <end position="158"/>
    </location>
</feature>
<feature type="binding site" evidence="1">
    <location>
        <position position="227"/>
    </location>
    <ligand>
        <name>ATP</name>
        <dbReference type="ChEBI" id="CHEBI:30616"/>
    </ligand>
</feature>
<feature type="binding site" evidence="1">
    <location>
        <position position="229"/>
    </location>
    <ligand>
        <name>ATP</name>
        <dbReference type="ChEBI" id="CHEBI:30616"/>
    </ligand>
</feature>
<feature type="binding site" evidence="1">
    <location>
        <position position="230"/>
    </location>
    <ligand>
        <name>ATP</name>
        <dbReference type="ChEBI" id="CHEBI:30616"/>
    </ligand>
</feature>
<feature type="binding site" evidence="1">
    <location>
        <position position="231"/>
    </location>
    <ligand>
        <name>ATP</name>
        <dbReference type="ChEBI" id="CHEBI:30616"/>
    </ligand>
</feature>
<keyword id="KW-0067">ATP-binding</keyword>
<keyword id="KW-0963">Cytoplasm</keyword>
<keyword id="KW-0235">DNA replication</keyword>
<keyword id="KW-0238">DNA-binding</keyword>
<keyword id="KW-0446">Lipid-binding</keyword>
<keyword id="KW-0547">Nucleotide-binding</keyword>
<keyword id="KW-1185">Reference proteome</keyword>
<sequence length="524" mass="58508">MSQNSSSLLETWRQVVADLTTLSQQADSGFDPLTPTQRAYLNLTKPIAIVDGYAVLSTPNAMAKNVIENDLGDALTRVLSLRMGRSFSLAVSVEPEQEIPETPAQQEFKYQPDAPVISSNKAPKQYEVGGRGEASTSDGWERTHSAPAPEPHPAPIADPEPELATPQRIPRETPAHNPNREVSLNPKYTFESFVIGPFNRFANAAAVAVAESPAKAFNPLFISGGSGLGKTHLLHAVGNYAQELQPGLRIKYVSSEEFTNDYINSVRDDRQETFKRRYRNLDILMVDDIQFLAGKEGTQEEFFHTFNALHQADKQIILSSDRPPKQLTTLEDRLRTRFEGGLITDIQPPDLETRIAILMKKAQTDGTHVDREVLELIASRFESSIRELEGALIRVSAYSSLINQPIDKEMAIVALRDILPEPEDMEITAPVIMEVTAEYFEISVDTLRGAGKTRAVAHARQLAMYLCRELTDMSLPKIGDVFGGKDHTTVMYADRKIRQEMTEKRDTYDEIQQLTQLIKSRGRN</sequence>
<protein>
    <recommendedName>
        <fullName evidence="1">Chromosomal replication initiator protein DnaA</fullName>
    </recommendedName>
</protein>
<evidence type="ECO:0000255" key="1">
    <source>
        <dbReference type="HAMAP-Rule" id="MF_00377"/>
    </source>
</evidence>
<evidence type="ECO:0000256" key="2">
    <source>
        <dbReference type="SAM" id="MobiDB-lite"/>
    </source>
</evidence>